<gene>
    <name type="ORF">DDB_G0286969</name>
</gene>
<sequence length="2079" mass="227899">MYSGLWTKNGEQILPSFISINAKVVDLAAQIVFTKTYSDINKYFATMNKMNSSNEEDATFKAFLNTSMGVLCGFEINLDGKKITSQVVSQADAMRLFEKNQISTADDIVKEAEFNNSDPHIEEDFFLCKVNNLSQYKELEIIITYSTEMSTQGDYLFMEFPTSLTTIRSSQFFETLDNENSTTNTNTQTQPQSVNTTTTTTPSTTTATNITNINNNIQNIGSSTTGGLTHSTSSNKLSLSSSSIQVNQKQGLLIEMNLDMPSKISEIISPSHSGLIDVEYKGETGKVTYKDSRSIDVVNQSDLVVLIKLDNPHEPYGFIEENENGSRALMIAFYPQLSSAAIAASATTPVVESELIFLVDVSESMEGYNMKHAKKALHRFLHSLSKDTYFNIISFASSHRKLFAQSVKYNDENLKAATAYVESLKAISHGETNLLEPLKDIYSVDATCPRKIFLLTDGRVNNIGPIVDLVRQNAHNTSVFPIGMGEFVSRQLVEYIANAGSGVAELVIENETIESKVMRQLKRALQPAMSNIKVDWGSLSSKSQAPRDLRTLFFGDRLTIYNILGKDEKIDGTTVKLIANGPTGPVSFPVTIKSEETKKGNLVHSLAAYTLIQDLQDQIYENNLVDPKDIDPIRQKIIDLGIKYGLASNYTSFCSVEQPDQFNELLNNNKQSEQAQETTTTTTTATTVDDNVVIEENKQPEPIVEEQPPVLNGNINLQNLTINHDGKSNDNGLFKSNDRLKTHHQGESAMISLRGSASGIPTTLSGSGIPFYNPSSPNHDRNINTTQQPTPTQSTPLKTPLKTPLTPLSKSGLKVSSPEFVPKNTLSAKAAPFVPSPNKLPTTTTSAPATTPITTPAPTTTTTEVKPTVAEPVKPVVAEPTKPVVAEPTIPAVAEPIKPVVTEPTKPVVEEPAKPAVKPTLFEMIKIAEAKAAAEQKAAAEQKAIADAKAAAEQAAKPVEPAVVQQQQPQQTKPKADKQSKQNAKDNKQSNKPVVVEQKPPVVTETKPTVATESATPTKPTFAQAAAAAAAAAQQAAQQAAATTPVKQQPTKQTTPNKSTPAVETKSVVAETKPAVEQPKPVETKPVVEQPKPVETKPVEQTKPVETKPVEVKPTVEQPKPVEVKPTVEQPKPIETKPTVNSIASTLANFGFQTNEPAKQATPTPAPTPVQSNESNNNNNNNNNNNNNNNNNNNNNNNIVSSTPIKKPAVTNILPTQAVILSSGGRRVYNNDFLLSFKDSNTKAPDSLKTTPIFSNGPQGISPSSGNGSNKSHFGKKRGDRGGRGGRDRNADAEPSTPIIVKKVFSQDVQGTHQELLKKFKFNLNRITMDTYSSLIKNIDELKVPDEEALKSISKILFEKAIIDQKYSAVYAILAGHLDTTFPKFAELSLKRAILDNCQTEFSAVVDKSKFEGLSKEDLEEQEFIIKRRVLGNIKFIGELYKHGVLGEKVAKAIVVQLITKCEERLDEESIEPLVKILNTIGKKLDEVDKANTDLYFSKVTNISNNPVVTSRGRFILLDLIDLRANKWQPKNSTQTKTKKDESDKEERFIAKHGGPQKRENDSRRDGGRDSRGDDRRGGGGRDSRGDDRRGGRDSRDAPRSAFGGKSSKDGWETVGAKGGNNRDKGGRGGDRSGGKQSPSGKKDSGFGPSSGGSSLFGSRRGDDRRDGGGNSSPYRPGQGFGRKDDQSSSIPSIPNRSNAFSALEDDDYQPSTSPQPPSVFGNRSNDRDSRGPSKPDNRKQPAQPPAPVEPVKPKINFEKIEDDISMTLDEYAETQDIDEAIECIKEINEPTVLGKQFNIFIMKSLERKEKEKQLIIELFSGILTAQLFNAEQIKEGLKEIIDTIEDIEIDLPFSGVFVATIVGICIESEIFPLNYLEEAYAHLVDSDKAEEMIVNTFNSIVKVSDKDRLVEIYENTKGLDILKLFALKNRKVAYLEEFYQTHFPYLSHEKAVEGSNESALNEQPDLIEHLLLLQSADGYWQLDKKLAGILGISLNILEEVDSSDSCVITTHPEVWATCLAITFVNLNNVSDPDDEDDLELVLSKSHKWLASQYQSDKPPKQSQDDVLLKAKRLLSEVL</sequence>
<accession>C7G046</accession>
<feature type="chain" id="PRO_0000389214" description="von Willebrand factor A domain-containing protein DDB_G0286969">
    <location>
        <begin position="1"/>
        <end position="2079"/>
    </location>
</feature>
<feature type="domain" description="VIT" evidence="4">
    <location>
        <begin position="11"/>
        <end position="147"/>
    </location>
</feature>
<feature type="domain" description="VWFA" evidence="2">
    <location>
        <begin position="354"/>
        <end position="525"/>
    </location>
</feature>
<feature type="domain" description="MIF4G" evidence="3">
    <location>
        <begin position="1317"/>
        <end position="1527"/>
    </location>
</feature>
<feature type="domain" description="MI" evidence="3">
    <location>
        <begin position="1760"/>
        <end position="1882"/>
    </location>
</feature>
<feature type="region of interest" description="Disordered" evidence="5">
    <location>
        <begin position="178"/>
        <end position="203"/>
    </location>
</feature>
<feature type="region of interest" description="Disordered" evidence="5">
    <location>
        <begin position="761"/>
        <end position="800"/>
    </location>
</feature>
<feature type="region of interest" description="Disordered" evidence="5">
    <location>
        <begin position="832"/>
        <end position="866"/>
    </location>
</feature>
<feature type="region of interest" description="Disordered" evidence="5">
    <location>
        <begin position="956"/>
        <end position="1139"/>
    </location>
</feature>
<feature type="region of interest" description="Disordered" evidence="5">
    <location>
        <begin position="1155"/>
        <end position="1203"/>
    </location>
</feature>
<feature type="region of interest" description="Disordered" evidence="5">
    <location>
        <begin position="1239"/>
        <end position="1294"/>
    </location>
</feature>
<feature type="region of interest" description="Disordered" evidence="5">
    <location>
        <begin position="1530"/>
        <end position="1755"/>
    </location>
</feature>
<feature type="coiled-coil region" evidence="1">
    <location>
        <begin position="923"/>
        <end position="957"/>
    </location>
</feature>
<feature type="compositionally biased region" description="Low complexity" evidence="5">
    <location>
        <begin position="180"/>
        <end position="203"/>
    </location>
</feature>
<feature type="compositionally biased region" description="Low complexity" evidence="5">
    <location>
        <begin position="785"/>
        <end position="800"/>
    </location>
</feature>
<feature type="compositionally biased region" description="Low complexity" evidence="5">
    <location>
        <begin position="841"/>
        <end position="866"/>
    </location>
</feature>
<feature type="compositionally biased region" description="Low complexity" evidence="5">
    <location>
        <begin position="956"/>
        <end position="973"/>
    </location>
</feature>
<feature type="compositionally biased region" description="Basic and acidic residues" evidence="5">
    <location>
        <begin position="974"/>
        <end position="989"/>
    </location>
</feature>
<feature type="compositionally biased region" description="Low complexity" evidence="5">
    <location>
        <begin position="992"/>
        <end position="1006"/>
    </location>
</feature>
<feature type="compositionally biased region" description="Polar residues" evidence="5">
    <location>
        <begin position="1007"/>
        <end position="1021"/>
    </location>
</feature>
<feature type="compositionally biased region" description="Low complexity" evidence="5">
    <location>
        <begin position="1023"/>
        <end position="1061"/>
    </location>
</feature>
<feature type="compositionally biased region" description="Basic and acidic residues" evidence="5">
    <location>
        <begin position="1092"/>
        <end position="1111"/>
    </location>
</feature>
<feature type="compositionally biased region" description="Low complexity" evidence="5">
    <location>
        <begin position="1176"/>
        <end position="1198"/>
    </location>
</feature>
<feature type="compositionally biased region" description="Polar residues" evidence="5">
    <location>
        <begin position="1239"/>
        <end position="1272"/>
    </location>
</feature>
<feature type="compositionally biased region" description="Basic and acidic residues" evidence="5">
    <location>
        <begin position="1280"/>
        <end position="1292"/>
    </location>
</feature>
<feature type="compositionally biased region" description="Basic and acidic residues" evidence="5">
    <location>
        <begin position="1538"/>
        <end position="1550"/>
    </location>
</feature>
<feature type="compositionally biased region" description="Basic and acidic residues" evidence="5">
    <location>
        <begin position="1557"/>
        <end position="1599"/>
    </location>
</feature>
<feature type="compositionally biased region" description="Basic and acidic residues" evidence="5">
    <location>
        <begin position="1621"/>
        <end position="1634"/>
    </location>
</feature>
<feature type="compositionally biased region" description="Low complexity" evidence="5">
    <location>
        <begin position="1635"/>
        <end position="1659"/>
    </location>
</feature>
<feature type="compositionally biased region" description="Low complexity" evidence="5">
    <location>
        <begin position="1688"/>
        <end position="1699"/>
    </location>
</feature>
<feature type="compositionally biased region" description="Basic and acidic residues" evidence="5">
    <location>
        <begin position="1725"/>
        <end position="1740"/>
    </location>
</feature>
<evidence type="ECO:0000255" key="1"/>
<evidence type="ECO:0000255" key="2">
    <source>
        <dbReference type="PROSITE-ProRule" id="PRU00219"/>
    </source>
</evidence>
<evidence type="ECO:0000255" key="3">
    <source>
        <dbReference type="PROSITE-ProRule" id="PRU00698"/>
    </source>
</evidence>
<evidence type="ECO:0000255" key="4">
    <source>
        <dbReference type="PROSITE-ProRule" id="PRU00801"/>
    </source>
</evidence>
<evidence type="ECO:0000256" key="5">
    <source>
        <dbReference type="SAM" id="MobiDB-lite"/>
    </source>
</evidence>
<dbReference type="EMBL" id="AAFI02000092">
    <property type="protein sequence ID" value="EEU04074.1"/>
    <property type="molecule type" value="Genomic_DNA"/>
</dbReference>
<dbReference type="RefSeq" id="XP_002649126.1">
    <property type="nucleotide sequence ID" value="XM_002649080.1"/>
</dbReference>
<dbReference type="SMR" id="C7G046"/>
<dbReference type="STRING" id="44689.C7G046"/>
<dbReference type="GlyGen" id="C7G046">
    <property type="glycosylation" value="4 sites"/>
</dbReference>
<dbReference type="PaxDb" id="44689-DDB0252861"/>
<dbReference type="EnsemblProtists" id="EEU04074">
    <property type="protein sequence ID" value="EEU04074"/>
    <property type="gene ID" value="DDB_G0286969"/>
</dbReference>
<dbReference type="GeneID" id="8625857"/>
<dbReference type="KEGG" id="ddi:DDB_G0286969"/>
<dbReference type="dictyBase" id="DDB_G0286969"/>
<dbReference type="VEuPathDB" id="AmoebaDB:DDB_G0286969"/>
<dbReference type="eggNOG" id="KOG0401">
    <property type="taxonomic scope" value="Eukaryota"/>
</dbReference>
<dbReference type="HOGENOM" id="CLU_232704_0_0_1"/>
<dbReference type="InParanoid" id="C7G046"/>
<dbReference type="OMA" id="FPIGMGE"/>
<dbReference type="PRO" id="PR:C7G046"/>
<dbReference type="Proteomes" id="UP000002195">
    <property type="component" value="Chromosome 4"/>
</dbReference>
<dbReference type="GO" id="GO:0003723">
    <property type="term" value="F:RNA binding"/>
    <property type="evidence" value="ECO:0007669"/>
    <property type="project" value="InterPro"/>
</dbReference>
<dbReference type="Gene3D" id="1.25.40.180">
    <property type="match status" value="2"/>
</dbReference>
<dbReference type="Gene3D" id="3.40.50.410">
    <property type="entry name" value="von Willebrand factor, type A domain"/>
    <property type="match status" value="1"/>
</dbReference>
<dbReference type="InterPro" id="IPR016024">
    <property type="entry name" value="ARM-type_fold"/>
</dbReference>
<dbReference type="InterPro" id="IPR003891">
    <property type="entry name" value="Initiation_fac_eIF4g_MI"/>
</dbReference>
<dbReference type="InterPro" id="IPR003890">
    <property type="entry name" value="MIF4G-like_typ-3"/>
</dbReference>
<dbReference type="InterPro" id="IPR013694">
    <property type="entry name" value="VIT"/>
</dbReference>
<dbReference type="InterPro" id="IPR002035">
    <property type="entry name" value="VWF_A"/>
</dbReference>
<dbReference type="InterPro" id="IPR036465">
    <property type="entry name" value="vWFA_dom_sf"/>
</dbReference>
<dbReference type="PANTHER" id="PTHR45737:SF5">
    <property type="entry name" value="POLY [ADP-RIBOSE] POLYMERASE-RELATED"/>
    <property type="match status" value="1"/>
</dbReference>
<dbReference type="PANTHER" id="PTHR45737">
    <property type="entry name" value="VON WILLEBRAND FACTOR A DOMAIN-CONTAINING PROTEIN 5A"/>
    <property type="match status" value="1"/>
</dbReference>
<dbReference type="Pfam" id="PF02847">
    <property type="entry name" value="MA3"/>
    <property type="match status" value="1"/>
</dbReference>
<dbReference type="Pfam" id="PF02854">
    <property type="entry name" value="MIF4G"/>
    <property type="match status" value="1"/>
</dbReference>
<dbReference type="Pfam" id="PF13768">
    <property type="entry name" value="VWA_3"/>
    <property type="match status" value="1"/>
</dbReference>
<dbReference type="SMART" id="SM00544">
    <property type="entry name" value="MA3"/>
    <property type="match status" value="1"/>
</dbReference>
<dbReference type="SMART" id="SM00543">
    <property type="entry name" value="MIF4G"/>
    <property type="match status" value="1"/>
</dbReference>
<dbReference type="SMART" id="SM00327">
    <property type="entry name" value="VWA"/>
    <property type="match status" value="1"/>
</dbReference>
<dbReference type="SUPFAM" id="SSF48371">
    <property type="entry name" value="ARM repeat"/>
    <property type="match status" value="2"/>
</dbReference>
<dbReference type="SUPFAM" id="SSF53300">
    <property type="entry name" value="vWA-like"/>
    <property type="match status" value="1"/>
</dbReference>
<dbReference type="PROSITE" id="PS51366">
    <property type="entry name" value="MI"/>
    <property type="match status" value="1"/>
</dbReference>
<dbReference type="PROSITE" id="PS51468">
    <property type="entry name" value="VIT"/>
    <property type="match status" value="1"/>
</dbReference>
<dbReference type="PROSITE" id="PS50234">
    <property type="entry name" value="VWFA"/>
    <property type="match status" value="1"/>
</dbReference>
<keyword id="KW-0175">Coiled coil</keyword>
<keyword id="KW-1185">Reference proteome</keyword>
<reference key="1">
    <citation type="journal article" date="2005" name="Nature">
        <title>The genome of the social amoeba Dictyostelium discoideum.</title>
        <authorList>
            <person name="Eichinger L."/>
            <person name="Pachebat J.A."/>
            <person name="Gloeckner G."/>
            <person name="Rajandream M.A."/>
            <person name="Sucgang R."/>
            <person name="Berriman M."/>
            <person name="Song J."/>
            <person name="Olsen R."/>
            <person name="Szafranski K."/>
            <person name="Xu Q."/>
            <person name="Tunggal B."/>
            <person name="Kummerfeld S."/>
            <person name="Madera M."/>
            <person name="Konfortov B.A."/>
            <person name="Rivero F."/>
            <person name="Bankier A.T."/>
            <person name="Lehmann R."/>
            <person name="Hamlin N."/>
            <person name="Davies R."/>
            <person name="Gaudet P."/>
            <person name="Fey P."/>
            <person name="Pilcher K."/>
            <person name="Chen G."/>
            <person name="Saunders D."/>
            <person name="Sodergren E.J."/>
            <person name="Davis P."/>
            <person name="Kerhornou A."/>
            <person name="Nie X."/>
            <person name="Hall N."/>
            <person name="Anjard C."/>
            <person name="Hemphill L."/>
            <person name="Bason N."/>
            <person name="Farbrother P."/>
            <person name="Desany B."/>
            <person name="Just E."/>
            <person name="Morio T."/>
            <person name="Rost R."/>
            <person name="Churcher C.M."/>
            <person name="Cooper J."/>
            <person name="Haydock S."/>
            <person name="van Driessche N."/>
            <person name="Cronin A."/>
            <person name="Goodhead I."/>
            <person name="Muzny D.M."/>
            <person name="Mourier T."/>
            <person name="Pain A."/>
            <person name="Lu M."/>
            <person name="Harper D."/>
            <person name="Lindsay R."/>
            <person name="Hauser H."/>
            <person name="James K.D."/>
            <person name="Quiles M."/>
            <person name="Madan Babu M."/>
            <person name="Saito T."/>
            <person name="Buchrieser C."/>
            <person name="Wardroper A."/>
            <person name="Felder M."/>
            <person name="Thangavelu M."/>
            <person name="Johnson D."/>
            <person name="Knights A."/>
            <person name="Loulseged H."/>
            <person name="Mungall K.L."/>
            <person name="Oliver K."/>
            <person name="Price C."/>
            <person name="Quail M.A."/>
            <person name="Urushihara H."/>
            <person name="Hernandez J."/>
            <person name="Rabbinowitsch E."/>
            <person name="Steffen D."/>
            <person name="Sanders M."/>
            <person name="Ma J."/>
            <person name="Kohara Y."/>
            <person name="Sharp S."/>
            <person name="Simmonds M.N."/>
            <person name="Spiegler S."/>
            <person name="Tivey A."/>
            <person name="Sugano S."/>
            <person name="White B."/>
            <person name="Walker D."/>
            <person name="Woodward J.R."/>
            <person name="Winckler T."/>
            <person name="Tanaka Y."/>
            <person name="Shaulsky G."/>
            <person name="Schleicher M."/>
            <person name="Weinstock G.M."/>
            <person name="Rosenthal A."/>
            <person name="Cox E.C."/>
            <person name="Chisholm R.L."/>
            <person name="Gibbs R.A."/>
            <person name="Loomis W.F."/>
            <person name="Platzer M."/>
            <person name="Kay R.R."/>
            <person name="Williams J.G."/>
            <person name="Dear P.H."/>
            <person name="Noegel A.A."/>
            <person name="Barrell B.G."/>
            <person name="Kuspa A."/>
        </authorList>
    </citation>
    <scope>NUCLEOTIDE SEQUENCE [LARGE SCALE GENOMIC DNA]</scope>
    <source>
        <strain>AX4</strain>
    </source>
</reference>
<proteinExistence type="predicted"/>
<name>Y6969_DICDI</name>
<organism>
    <name type="scientific">Dictyostelium discoideum</name>
    <name type="common">Social amoeba</name>
    <dbReference type="NCBI Taxonomy" id="44689"/>
    <lineage>
        <taxon>Eukaryota</taxon>
        <taxon>Amoebozoa</taxon>
        <taxon>Evosea</taxon>
        <taxon>Eumycetozoa</taxon>
        <taxon>Dictyostelia</taxon>
        <taxon>Dictyosteliales</taxon>
        <taxon>Dictyosteliaceae</taxon>
        <taxon>Dictyostelium</taxon>
    </lineage>
</organism>
<protein>
    <recommendedName>
        <fullName>von Willebrand factor A domain-containing protein DDB_G0286969</fullName>
    </recommendedName>
</protein>